<gene>
    <name evidence="1" type="primary">uvrC</name>
    <name type="ordered locus">MAG5020</name>
</gene>
<sequence>MDKNEIILKLKNTSTSPGVYLWKDAKQNVLYVGKAKNLRKRLLQYFDGAINSYKTSKLMSLVADFEVYICKTNKEALLLEKAMVDRFNPEFNILLLDDRKYPYLKVQLLKDSLLITLSRKVNTKYTKNTLYYGPFPSGYGAKPILKLLQHEALYESGLLIKNNDSSFWVNQFAKIKEILSFKNNNYLNELTNKMHTAANNMQFELALFLRDGLTYLKKLKESQIIELSQYKNIDVFAYKTDEKLIYATVLFYRYGVLINKVNLTIPLGISIDESIRVFFEQFYADKILPDNFIVQEEILKYDLNLSSDYKFISPKIGTNKKVLDLALLNLNDYYEKEHLIMQNQLEKADSMLSSLNKYLNLPKLKNIVIFDNSNINNINPVGVAIVYTNGIKNKSLYRKFNLEALSYRSADVDYIRQSITKFFSSDKNTKDFDLIITDGGLQQVNEAKKTLKVLGINIPVIGLVKNEYHKTRALIDLNLNEIYVNDLELHNYLAQIQIEVDRFAKSHFRNRQKISSLEGKLRNIKGLGHNMEQKLLNHFKSYAKIYDASVEELAKIVPFNVAKSIKNKDYE</sequence>
<evidence type="ECO:0000255" key="1">
    <source>
        <dbReference type="HAMAP-Rule" id="MF_00203"/>
    </source>
</evidence>
<protein>
    <recommendedName>
        <fullName evidence="1">UvrABC system protein C</fullName>
        <shortName evidence="1">Protein UvrC</shortName>
    </recommendedName>
    <alternativeName>
        <fullName evidence="1">Excinuclease ABC subunit C</fullName>
    </alternativeName>
</protein>
<name>UVRC_MYCAP</name>
<accession>O84899</accession>
<accession>A5IYU1</accession>
<feature type="chain" id="PRO_0000138315" description="UvrABC system protein C">
    <location>
        <begin position="1"/>
        <end position="571"/>
    </location>
</feature>
<feature type="domain" description="GIY-YIG" evidence="1">
    <location>
        <begin position="15"/>
        <end position="93"/>
    </location>
</feature>
<feature type="domain" description="UVR" evidence="1">
    <location>
        <begin position="184"/>
        <end position="219"/>
    </location>
</feature>
<comment type="function">
    <text evidence="1">The UvrABC repair system catalyzes the recognition and processing of DNA lesions. UvrC both incises the 5' and 3' sides of the lesion. The N-terminal half is responsible for the 3' incision and the C-terminal half is responsible for the 5' incision.</text>
</comment>
<comment type="subunit">
    <text evidence="1">Interacts with UvrB in an incision complex.</text>
</comment>
<comment type="subcellular location">
    <subcellularLocation>
        <location evidence="1">Cytoplasm</location>
    </subcellularLocation>
</comment>
<comment type="similarity">
    <text evidence="1">Belongs to the UvrC family.</text>
</comment>
<organism>
    <name type="scientific">Mycoplasmopsis agalactiae (strain NCTC 10123 / CIP 59.7 / PG2)</name>
    <name type="common">Mycoplasma agalactiae</name>
    <dbReference type="NCBI Taxonomy" id="347257"/>
    <lineage>
        <taxon>Bacteria</taxon>
        <taxon>Bacillati</taxon>
        <taxon>Mycoplasmatota</taxon>
        <taxon>Mycoplasmoidales</taxon>
        <taxon>Metamycoplasmataceae</taxon>
        <taxon>Mycoplasmopsis</taxon>
    </lineage>
</organism>
<dbReference type="EMBL" id="AF003960">
    <property type="protein sequence ID" value="AAC32310.1"/>
    <property type="molecule type" value="Genomic_DNA"/>
</dbReference>
<dbReference type="EMBL" id="CU179680">
    <property type="protein sequence ID" value="CAL59200.1"/>
    <property type="molecule type" value="Genomic_DNA"/>
</dbReference>
<dbReference type="RefSeq" id="WP_011949668.1">
    <property type="nucleotide sequence ID" value="NC_009497.1"/>
</dbReference>
<dbReference type="SMR" id="O84899"/>
<dbReference type="STRING" id="347257.MAG5020"/>
<dbReference type="GeneID" id="93358239"/>
<dbReference type="KEGG" id="maa:MAG5020"/>
<dbReference type="HOGENOM" id="CLU_014841_3_2_14"/>
<dbReference type="Proteomes" id="UP000007065">
    <property type="component" value="Chromosome"/>
</dbReference>
<dbReference type="GO" id="GO:0005737">
    <property type="term" value="C:cytoplasm"/>
    <property type="evidence" value="ECO:0007669"/>
    <property type="project" value="UniProtKB-SubCell"/>
</dbReference>
<dbReference type="GO" id="GO:0009380">
    <property type="term" value="C:excinuclease repair complex"/>
    <property type="evidence" value="ECO:0007669"/>
    <property type="project" value="InterPro"/>
</dbReference>
<dbReference type="GO" id="GO:0003677">
    <property type="term" value="F:DNA binding"/>
    <property type="evidence" value="ECO:0007669"/>
    <property type="project" value="UniProtKB-UniRule"/>
</dbReference>
<dbReference type="GO" id="GO:0009381">
    <property type="term" value="F:excinuclease ABC activity"/>
    <property type="evidence" value="ECO:0007669"/>
    <property type="project" value="UniProtKB-UniRule"/>
</dbReference>
<dbReference type="GO" id="GO:0006289">
    <property type="term" value="P:nucleotide-excision repair"/>
    <property type="evidence" value="ECO:0007669"/>
    <property type="project" value="UniProtKB-UniRule"/>
</dbReference>
<dbReference type="GO" id="GO:0009432">
    <property type="term" value="P:SOS response"/>
    <property type="evidence" value="ECO:0007669"/>
    <property type="project" value="UniProtKB-UniRule"/>
</dbReference>
<dbReference type="CDD" id="cd10434">
    <property type="entry name" value="GIY-YIG_UvrC_Cho"/>
    <property type="match status" value="1"/>
</dbReference>
<dbReference type="FunFam" id="3.40.1440.10:FF:000001">
    <property type="entry name" value="UvrABC system protein C"/>
    <property type="match status" value="1"/>
</dbReference>
<dbReference type="Gene3D" id="1.10.150.20">
    <property type="entry name" value="5' to 3' exonuclease, C-terminal subdomain"/>
    <property type="match status" value="1"/>
</dbReference>
<dbReference type="Gene3D" id="3.40.1440.10">
    <property type="entry name" value="GIY-YIG endonuclease"/>
    <property type="match status" value="1"/>
</dbReference>
<dbReference type="Gene3D" id="4.10.860.10">
    <property type="entry name" value="UVR domain"/>
    <property type="match status" value="1"/>
</dbReference>
<dbReference type="Gene3D" id="3.30.420.340">
    <property type="entry name" value="UvrC, RNAse H endonuclease domain"/>
    <property type="match status" value="1"/>
</dbReference>
<dbReference type="HAMAP" id="MF_00203">
    <property type="entry name" value="UvrC"/>
    <property type="match status" value="1"/>
</dbReference>
<dbReference type="InterPro" id="IPR000305">
    <property type="entry name" value="GIY-YIG_endonuc"/>
</dbReference>
<dbReference type="InterPro" id="IPR035901">
    <property type="entry name" value="GIY-YIG_endonuc_sf"/>
</dbReference>
<dbReference type="InterPro" id="IPR047296">
    <property type="entry name" value="GIY-YIG_UvrC_Cho"/>
</dbReference>
<dbReference type="InterPro" id="IPR010994">
    <property type="entry name" value="RuvA_2-like"/>
</dbReference>
<dbReference type="InterPro" id="IPR001943">
    <property type="entry name" value="UVR_dom"/>
</dbReference>
<dbReference type="InterPro" id="IPR036876">
    <property type="entry name" value="UVR_dom_sf"/>
</dbReference>
<dbReference type="InterPro" id="IPR050066">
    <property type="entry name" value="UvrABC_protein_C"/>
</dbReference>
<dbReference type="InterPro" id="IPR004791">
    <property type="entry name" value="UvrC"/>
</dbReference>
<dbReference type="InterPro" id="IPR001162">
    <property type="entry name" value="UvrC_RNase_H_dom"/>
</dbReference>
<dbReference type="InterPro" id="IPR038476">
    <property type="entry name" value="UvrC_RNase_H_dom_sf"/>
</dbReference>
<dbReference type="PANTHER" id="PTHR30562:SF1">
    <property type="entry name" value="UVRABC SYSTEM PROTEIN C"/>
    <property type="match status" value="1"/>
</dbReference>
<dbReference type="PANTHER" id="PTHR30562">
    <property type="entry name" value="UVRC/OXIDOREDUCTASE"/>
    <property type="match status" value="1"/>
</dbReference>
<dbReference type="Pfam" id="PF01541">
    <property type="entry name" value="GIY-YIG"/>
    <property type="match status" value="1"/>
</dbReference>
<dbReference type="Pfam" id="PF02151">
    <property type="entry name" value="UVR"/>
    <property type="match status" value="1"/>
</dbReference>
<dbReference type="Pfam" id="PF22920">
    <property type="entry name" value="UvrC_RNaseH"/>
    <property type="match status" value="1"/>
</dbReference>
<dbReference type="Pfam" id="PF08459">
    <property type="entry name" value="UvrC_RNaseH_dom"/>
    <property type="match status" value="1"/>
</dbReference>
<dbReference type="SMART" id="SM00465">
    <property type="entry name" value="GIYc"/>
    <property type="match status" value="1"/>
</dbReference>
<dbReference type="SUPFAM" id="SSF46600">
    <property type="entry name" value="C-terminal UvrC-binding domain of UvrB"/>
    <property type="match status" value="1"/>
</dbReference>
<dbReference type="SUPFAM" id="SSF82771">
    <property type="entry name" value="GIY-YIG endonuclease"/>
    <property type="match status" value="1"/>
</dbReference>
<dbReference type="SUPFAM" id="SSF47781">
    <property type="entry name" value="RuvA domain 2-like"/>
    <property type="match status" value="1"/>
</dbReference>
<dbReference type="PROSITE" id="PS50164">
    <property type="entry name" value="GIY_YIG"/>
    <property type="match status" value="1"/>
</dbReference>
<dbReference type="PROSITE" id="PS50151">
    <property type="entry name" value="UVR"/>
    <property type="match status" value="1"/>
</dbReference>
<dbReference type="PROSITE" id="PS50165">
    <property type="entry name" value="UVRC"/>
    <property type="match status" value="1"/>
</dbReference>
<proteinExistence type="inferred from homology"/>
<reference key="1">
    <citation type="journal article" date="1998" name="Mol. Cell. Probes">
        <title>Species identification of Mycoplasma bovis and Mycoplasma agalactiae based on the uvrC genes by PCR.</title>
        <authorList>
            <person name="Subramaniam S."/>
            <person name="Bergonier D."/>
            <person name="Poumarat F."/>
            <person name="Capaul S."/>
            <person name="Schlatter Y."/>
            <person name="Nicolet J."/>
            <person name="Frey J."/>
        </authorList>
    </citation>
    <scope>NUCLEOTIDE SEQUENCE [GENOMIC DNA]</scope>
</reference>
<reference key="2">
    <citation type="journal article" date="2007" name="PLoS Genet.">
        <title>Being pathogenic, plastic, and sexual while living with a nearly minimal bacterial genome.</title>
        <authorList>
            <person name="Sirand-Pugnet P."/>
            <person name="Lartigue C."/>
            <person name="Marenda M."/>
            <person name="Jacob D."/>
            <person name="Barre A."/>
            <person name="Barbe V."/>
            <person name="Schenowitz C."/>
            <person name="Mangenot S."/>
            <person name="Couloux A."/>
            <person name="Segurens B."/>
            <person name="de Daruvar A."/>
            <person name="Blanchard A."/>
            <person name="Citti C."/>
        </authorList>
    </citation>
    <scope>NUCLEOTIDE SEQUENCE [LARGE SCALE GENOMIC DNA]</scope>
    <source>
        <strain>NCTC 10123 / CIP 59.7 / PG2</strain>
    </source>
</reference>
<keyword id="KW-0963">Cytoplasm</keyword>
<keyword id="KW-0227">DNA damage</keyword>
<keyword id="KW-0228">DNA excision</keyword>
<keyword id="KW-0234">DNA repair</keyword>
<keyword id="KW-0267">Excision nuclease</keyword>
<keyword id="KW-1185">Reference proteome</keyword>
<keyword id="KW-0742">SOS response</keyword>